<proteinExistence type="inferred from homology"/>
<dbReference type="EC" id="2.4.2.17" evidence="1"/>
<dbReference type="EMBL" id="CP001348">
    <property type="protein sequence ID" value="ACL74766.1"/>
    <property type="molecule type" value="Genomic_DNA"/>
</dbReference>
<dbReference type="RefSeq" id="WP_012634829.1">
    <property type="nucleotide sequence ID" value="NC_011898.1"/>
</dbReference>
<dbReference type="SMR" id="B8I5U9"/>
<dbReference type="STRING" id="394503.Ccel_0381"/>
<dbReference type="KEGG" id="cce:Ccel_0381"/>
<dbReference type="eggNOG" id="COG0040">
    <property type="taxonomic scope" value="Bacteria"/>
</dbReference>
<dbReference type="HOGENOM" id="CLU_038115_2_0_9"/>
<dbReference type="OrthoDB" id="9801867at2"/>
<dbReference type="UniPathway" id="UPA00031">
    <property type="reaction ID" value="UER00006"/>
</dbReference>
<dbReference type="Proteomes" id="UP000001349">
    <property type="component" value="Chromosome"/>
</dbReference>
<dbReference type="GO" id="GO:0005737">
    <property type="term" value="C:cytoplasm"/>
    <property type="evidence" value="ECO:0007669"/>
    <property type="project" value="UniProtKB-SubCell"/>
</dbReference>
<dbReference type="GO" id="GO:0005524">
    <property type="term" value="F:ATP binding"/>
    <property type="evidence" value="ECO:0007669"/>
    <property type="project" value="UniProtKB-KW"/>
</dbReference>
<dbReference type="GO" id="GO:0003879">
    <property type="term" value="F:ATP phosphoribosyltransferase activity"/>
    <property type="evidence" value="ECO:0007669"/>
    <property type="project" value="UniProtKB-UniRule"/>
</dbReference>
<dbReference type="GO" id="GO:0000105">
    <property type="term" value="P:L-histidine biosynthetic process"/>
    <property type="evidence" value="ECO:0007669"/>
    <property type="project" value="UniProtKB-UniRule"/>
</dbReference>
<dbReference type="CDD" id="cd13595">
    <property type="entry name" value="PBP2_HisGs"/>
    <property type="match status" value="1"/>
</dbReference>
<dbReference type="FunFam" id="3.40.190.10:FF:000008">
    <property type="entry name" value="ATP phosphoribosyltransferase"/>
    <property type="match status" value="1"/>
</dbReference>
<dbReference type="FunFam" id="3.40.190.10:FF:000011">
    <property type="entry name" value="ATP phosphoribosyltransferase"/>
    <property type="match status" value="1"/>
</dbReference>
<dbReference type="Gene3D" id="3.40.190.10">
    <property type="entry name" value="Periplasmic binding protein-like II"/>
    <property type="match status" value="2"/>
</dbReference>
<dbReference type="HAMAP" id="MF_01018">
    <property type="entry name" value="HisG_Short"/>
    <property type="match status" value="1"/>
</dbReference>
<dbReference type="InterPro" id="IPR013820">
    <property type="entry name" value="ATP_PRibTrfase_cat"/>
</dbReference>
<dbReference type="InterPro" id="IPR018198">
    <property type="entry name" value="ATP_PRibTrfase_CS"/>
</dbReference>
<dbReference type="InterPro" id="IPR001348">
    <property type="entry name" value="ATP_PRibTrfase_HisG"/>
</dbReference>
<dbReference type="InterPro" id="IPR024893">
    <property type="entry name" value="ATP_PRibTrfase_HisG_short"/>
</dbReference>
<dbReference type="NCBIfam" id="TIGR00070">
    <property type="entry name" value="hisG"/>
    <property type="match status" value="1"/>
</dbReference>
<dbReference type="PANTHER" id="PTHR21403:SF8">
    <property type="entry name" value="ATP PHOSPHORIBOSYLTRANSFERASE"/>
    <property type="match status" value="1"/>
</dbReference>
<dbReference type="PANTHER" id="PTHR21403">
    <property type="entry name" value="ATP PHOSPHORIBOSYLTRANSFERASE ATP-PRTASE"/>
    <property type="match status" value="1"/>
</dbReference>
<dbReference type="Pfam" id="PF01634">
    <property type="entry name" value="HisG"/>
    <property type="match status" value="1"/>
</dbReference>
<dbReference type="SUPFAM" id="SSF53850">
    <property type="entry name" value="Periplasmic binding protein-like II"/>
    <property type="match status" value="1"/>
</dbReference>
<dbReference type="PROSITE" id="PS01316">
    <property type="entry name" value="ATP_P_PHORIBOSYLTR"/>
    <property type="match status" value="1"/>
</dbReference>
<gene>
    <name evidence="1" type="primary">hisG</name>
    <name type="ordered locus">Ccel_0381</name>
</gene>
<sequence>MRYLTIALSKGRLTDMSVEIFEKIGIDCTELKSSTRKLILSDEKNKIKFFLAKPADVPTYVEYGAADIGIVGKDTLLEEGRNLYEVLDLGFAACRMALAGPAELQGKIDELNIKRVGTKYPNITRNYFEKTRRESVEIIKLNGSVELAPLVGLSEVIVDLVESGRTLKENGLVVLDTIADISARMVVNRVSMKMENERIQKIIDGVRDELSVRG</sequence>
<protein>
    <recommendedName>
        <fullName evidence="1">ATP phosphoribosyltransferase</fullName>
        <shortName evidence="1">ATP-PRT</shortName>
        <shortName evidence="1">ATP-PRTase</shortName>
        <ecNumber evidence="1">2.4.2.17</ecNumber>
    </recommendedName>
</protein>
<name>HIS1_RUMCH</name>
<comment type="function">
    <text evidence="1">Catalyzes the condensation of ATP and 5-phosphoribose 1-diphosphate to form N'-(5'-phosphoribosyl)-ATP (PR-ATP). Has a crucial role in the pathway because the rate of histidine biosynthesis seems to be controlled primarily by regulation of HisG enzymatic activity.</text>
</comment>
<comment type="catalytic activity">
    <reaction evidence="1">
        <text>1-(5-phospho-beta-D-ribosyl)-ATP + diphosphate = 5-phospho-alpha-D-ribose 1-diphosphate + ATP</text>
        <dbReference type="Rhea" id="RHEA:18473"/>
        <dbReference type="ChEBI" id="CHEBI:30616"/>
        <dbReference type="ChEBI" id="CHEBI:33019"/>
        <dbReference type="ChEBI" id="CHEBI:58017"/>
        <dbReference type="ChEBI" id="CHEBI:73183"/>
        <dbReference type="EC" id="2.4.2.17"/>
    </reaction>
</comment>
<comment type="pathway">
    <text evidence="1">Amino-acid biosynthesis; L-histidine biosynthesis; L-histidine from 5-phospho-alpha-D-ribose 1-diphosphate: step 1/9.</text>
</comment>
<comment type="subunit">
    <text evidence="1">Heteromultimer composed of HisG and HisZ subunits.</text>
</comment>
<comment type="subcellular location">
    <subcellularLocation>
        <location evidence="1">Cytoplasm</location>
    </subcellularLocation>
</comment>
<comment type="domain">
    <text>Lacks the C-terminal regulatory region which is replaced by HisZ.</text>
</comment>
<comment type="similarity">
    <text evidence="1">Belongs to the ATP phosphoribosyltransferase family. Short subfamily.</text>
</comment>
<evidence type="ECO:0000255" key="1">
    <source>
        <dbReference type="HAMAP-Rule" id="MF_01018"/>
    </source>
</evidence>
<organism>
    <name type="scientific">Ruminiclostridium cellulolyticum (strain ATCC 35319 / DSM 5812 / JCM 6584 / H10)</name>
    <name type="common">Clostridium cellulolyticum</name>
    <dbReference type="NCBI Taxonomy" id="394503"/>
    <lineage>
        <taxon>Bacteria</taxon>
        <taxon>Bacillati</taxon>
        <taxon>Bacillota</taxon>
        <taxon>Clostridia</taxon>
        <taxon>Eubacteriales</taxon>
        <taxon>Oscillospiraceae</taxon>
        <taxon>Ruminiclostridium</taxon>
    </lineage>
</organism>
<accession>B8I5U9</accession>
<reference key="1">
    <citation type="submission" date="2009-01" db="EMBL/GenBank/DDBJ databases">
        <title>Complete sequence of Clostridium cellulolyticum H10.</title>
        <authorList>
            <consortium name="US DOE Joint Genome Institute"/>
            <person name="Lucas S."/>
            <person name="Copeland A."/>
            <person name="Lapidus A."/>
            <person name="Glavina del Rio T."/>
            <person name="Dalin E."/>
            <person name="Tice H."/>
            <person name="Bruce D."/>
            <person name="Goodwin L."/>
            <person name="Pitluck S."/>
            <person name="Chertkov O."/>
            <person name="Saunders E."/>
            <person name="Brettin T."/>
            <person name="Detter J.C."/>
            <person name="Han C."/>
            <person name="Larimer F."/>
            <person name="Land M."/>
            <person name="Hauser L."/>
            <person name="Kyrpides N."/>
            <person name="Ivanova N."/>
            <person name="Zhou J."/>
            <person name="Richardson P."/>
        </authorList>
    </citation>
    <scope>NUCLEOTIDE SEQUENCE [LARGE SCALE GENOMIC DNA]</scope>
    <source>
        <strain>ATCC 35319 / DSM 5812 / JCM 6584 / H10</strain>
    </source>
</reference>
<feature type="chain" id="PRO_1000213260" description="ATP phosphoribosyltransferase">
    <location>
        <begin position="1"/>
        <end position="214"/>
    </location>
</feature>
<keyword id="KW-0028">Amino-acid biosynthesis</keyword>
<keyword id="KW-0067">ATP-binding</keyword>
<keyword id="KW-0963">Cytoplasm</keyword>
<keyword id="KW-0328">Glycosyltransferase</keyword>
<keyword id="KW-0368">Histidine biosynthesis</keyword>
<keyword id="KW-0547">Nucleotide-binding</keyword>
<keyword id="KW-1185">Reference proteome</keyword>
<keyword id="KW-0808">Transferase</keyword>